<organism>
    <name type="scientific">Clostridium novyi (strain NT)</name>
    <dbReference type="NCBI Taxonomy" id="386415"/>
    <lineage>
        <taxon>Bacteria</taxon>
        <taxon>Bacillati</taxon>
        <taxon>Bacillota</taxon>
        <taxon>Clostridia</taxon>
        <taxon>Eubacteriales</taxon>
        <taxon>Clostridiaceae</taxon>
        <taxon>Clostridium</taxon>
    </lineage>
</organism>
<keyword id="KW-1003">Cell membrane</keyword>
<keyword id="KW-0407">Ion channel</keyword>
<keyword id="KW-0406">Ion transport</keyword>
<keyword id="KW-0472">Membrane</keyword>
<keyword id="KW-0479">Metal-binding</keyword>
<keyword id="KW-1185">Reference proteome</keyword>
<keyword id="KW-0915">Sodium</keyword>
<keyword id="KW-0812">Transmembrane</keyword>
<keyword id="KW-1133">Transmembrane helix</keyword>
<keyword id="KW-0813">Transport</keyword>
<accession>A0Q1L0</accession>
<feature type="chain" id="PRO_1000026381" description="Fluoride-specific ion channel FluC">
    <location>
        <begin position="1"/>
        <end position="128"/>
    </location>
</feature>
<feature type="transmembrane region" description="Helical" evidence="1">
    <location>
        <begin position="4"/>
        <end position="24"/>
    </location>
</feature>
<feature type="transmembrane region" description="Helical" evidence="1">
    <location>
        <begin position="37"/>
        <end position="57"/>
    </location>
</feature>
<feature type="transmembrane region" description="Helical" evidence="1">
    <location>
        <begin position="63"/>
        <end position="83"/>
    </location>
</feature>
<feature type="transmembrane region" description="Helical" evidence="1">
    <location>
        <begin position="99"/>
        <end position="119"/>
    </location>
</feature>
<feature type="binding site" evidence="1">
    <location>
        <position position="78"/>
    </location>
    <ligand>
        <name>Na(+)</name>
        <dbReference type="ChEBI" id="CHEBI:29101"/>
        <note>structural</note>
    </ligand>
</feature>
<feature type="binding site" evidence="1">
    <location>
        <position position="81"/>
    </location>
    <ligand>
        <name>Na(+)</name>
        <dbReference type="ChEBI" id="CHEBI:29101"/>
        <note>structural</note>
    </ligand>
</feature>
<comment type="function">
    <text evidence="1">Fluoride-specific ion channel. Important for reducing fluoride concentration in the cell, thus reducing its toxicity.</text>
</comment>
<comment type="catalytic activity">
    <reaction evidence="1">
        <text>fluoride(in) = fluoride(out)</text>
        <dbReference type="Rhea" id="RHEA:76159"/>
        <dbReference type="ChEBI" id="CHEBI:17051"/>
    </reaction>
    <physiologicalReaction direction="left-to-right" evidence="1">
        <dbReference type="Rhea" id="RHEA:76160"/>
    </physiologicalReaction>
</comment>
<comment type="activity regulation">
    <text evidence="1">Na(+) is not transported, but it plays an essential structural role and its presence is essential for fluoride channel function.</text>
</comment>
<comment type="subcellular location">
    <subcellularLocation>
        <location evidence="1">Cell membrane</location>
        <topology evidence="1">Multi-pass membrane protein</topology>
    </subcellularLocation>
</comment>
<comment type="similarity">
    <text evidence="1">Belongs to the fluoride channel Fluc/FEX (TC 1.A.43) family.</text>
</comment>
<evidence type="ECO:0000255" key="1">
    <source>
        <dbReference type="HAMAP-Rule" id="MF_00454"/>
    </source>
</evidence>
<reference key="1">
    <citation type="journal article" date="2006" name="Nat. Biotechnol.">
        <title>The genome and transcriptomes of the anti-tumor agent Clostridium novyi-NT.</title>
        <authorList>
            <person name="Bettegowda C."/>
            <person name="Huang X."/>
            <person name="Lin J."/>
            <person name="Cheong I."/>
            <person name="Kohli M."/>
            <person name="Szabo S.A."/>
            <person name="Zhang X."/>
            <person name="Diaz L.A. Jr."/>
            <person name="Velculescu V.E."/>
            <person name="Parmigiani G."/>
            <person name="Kinzler K.W."/>
            <person name="Vogelstein B."/>
            <person name="Zhou S."/>
        </authorList>
    </citation>
    <scope>NUCLEOTIDE SEQUENCE [LARGE SCALE GENOMIC DNA]</scope>
    <source>
        <strain>NT</strain>
    </source>
</reference>
<name>FLUC_CLONN</name>
<protein>
    <recommendedName>
        <fullName evidence="1">Fluoride-specific ion channel FluC</fullName>
    </recommendedName>
</protein>
<proteinExistence type="inferred from homology"/>
<sequence length="128" mass="13459">MEKLILAIIVGCGGFIGAALRYLISENTSKMFNGNFPYGTLIVNIVGAIIIGFIMDINANTSLISGHTKLFLTTGMMGGLTTFSTFSYETINLINCGNILMGCTNAALNLGLSLVGVIIGQALGKIVY</sequence>
<dbReference type="EMBL" id="CP000382">
    <property type="protein sequence ID" value="ABK60613.1"/>
    <property type="molecule type" value="Genomic_DNA"/>
</dbReference>
<dbReference type="RefSeq" id="WP_011722506.1">
    <property type="nucleotide sequence ID" value="NC_008593.1"/>
</dbReference>
<dbReference type="SMR" id="A0Q1L0"/>
<dbReference type="STRING" id="386415.NT01CX_0003"/>
<dbReference type="KEGG" id="cno:NT01CX_0003"/>
<dbReference type="eggNOG" id="COG0239">
    <property type="taxonomic scope" value="Bacteria"/>
</dbReference>
<dbReference type="HOGENOM" id="CLU_114342_3_2_9"/>
<dbReference type="Proteomes" id="UP000008220">
    <property type="component" value="Chromosome"/>
</dbReference>
<dbReference type="GO" id="GO:0005886">
    <property type="term" value="C:plasma membrane"/>
    <property type="evidence" value="ECO:0007669"/>
    <property type="project" value="UniProtKB-SubCell"/>
</dbReference>
<dbReference type="GO" id="GO:0062054">
    <property type="term" value="F:fluoride channel activity"/>
    <property type="evidence" value="ECO:0007669"/>
    <property type="project" value="UniProtKB-UniRule"/>
</dbReference>
<dbReference type="GO" id="GO:0046872">
    <property type="term" value="F:metal ion binding"/>
    <property type="evidence" value="ECO:0007669"/>
    <property type="project" value="UniProtKB-KW"/>
</dbReference>
<dbReference type="GO" id="GO:0140114">
    <property type="term" value="P:cellular detoxification of fluoride"/>
    <property type="evidence" value="ECO:0007669"/>
    <property type="project" value="UniProtKB-UniRule"/>
</dbReference>
<dbReference type="HAMAP" id="MF_00454">
    <property type="entry name" value="FluC"/>
    <property type="match status" value="1"/>
</dbReference>
<dbReference type="InterPro" id="IPR003691">
    <property type="entry name" value="FluC"/>
</dbReference>
<dbReference type="InterPro" id="IPR036280">
    <property type="entry name" value="Multihaem_cyt_sf"/>
</dbReference>
<dbReference type="NCBIfam" id="TIGR00494">
    <property type="entry name" value="crcB"/>
    <property type="match status" value="1"/>
</dbReference>
<dbReference type="PANTHER" id="PTHR28259">
    <property type="entry name" value="FLUORIDE EXPORT PROTEIN 1-RELATED"/>
    <property type="match status" value="1"/>
</dbReference>
<dbReference type="PANTHER" id="PTHR28259:SF1">
    <property type="entry name" value="FLUORIDE EXPORT PROTEIN 1-RELATED"/>
    <property type="match status" value="1"/>
</dbReference>
<dbReference type="Pfam" id="PF02537">
    <property type="entry name" value="CRCB"/>
    <property type="match status" value="1"/>
</dbReference>
<dbReference type="SUPFAM" id="SSF48695">
    <property type="entry name" value="Multiheme cytochromes"/>
    <property type="match status" value="1"/>
</dbReference>
<gene>
    <name evidence="1" type="primary">fluC</name>
    <name evidence="1" type="synonym">crcB</name>
    <name type="ordered locus">NT01CX_0003</name>
</gene>